<gene>
    <name evidence="1" type="primary">gpsA</name>
    <name type="ordered locus">BCE_1632</name>
</gene>
<keyword id="KW-0963">Cytoplasm</keyword>
<keyword id="KW-0444">Lipid biosynthesis</keyword>
<keyword id="KW-0443">Lipid metabolism</keyword>
<keyword id="KW-0520">NAD</keyword>
<keyword id="KW-0521">NADP</keyword>
<keyword id="KW-0547">Nucleotide-binding</keyword>
<keyword id="KW-0560">Oxidoreductase</keyword>
<keyword id="KW-0594">Phospholipid biosynthesis</keyword>
<keyword id="KW-1208">Phospholipid metabolism</keyword>
<reference key="1">
    <citation type="journal article" date="2004" name="Nucleic Acids Res.">
        <title>The genome sequence of Bacillus cereus ATCC 10987 reveals metabolic adaptations and a large plasmid related to Bacillus anthracis pXO1.</title>
        <authorList>
            <person name="Rasko D.A."/>
            <person name="Ravel J."/>
            <person name="Oekstad O.A."/>
            <person name="Helgason E."/>
            <person name="Cer R.Z."/>
            <person name="Jiang L."/>
            <person name="Shores K.A."/>
            <person name="Fouts D.E."/>
            <person name="Tourasse N.J."/>
            <person name="Angiuoli S.V."/>
            <person name="Kolonay J.F."/>
            <person name="Nelson W.C."/>
            <person name="Kolstoe A.-B."/>
            <person name="Fraser C.M."/>
            <person name="Read T.D."/>
        </authorList>
    </citation>
    <scope>NUCLEOTIDE SEQUENCE [LARGE SCALE GENOMIC DNA]</scope>
    <source>
        <strain>ATCC 10987 / NRS 248</strain>
    </source>
</reference>
<dbReference type="EC" id="1.1.1.94" evidence="1"/>
<dbReference type="EMBL" id="AE017194">
    <property type="protein sequence ID" value="AAS40561.1"/>
    <property type="molecule type" value="Genomic_DNA"/>
</dbReference>
<dbReference type="SMR" id="P61737"/>
<dbReference type="KEGG" id="bca:BCE_1632"/>
<dbReference type="HOGENOM" id="CLU_033449_0_2_9"/>
<dbReference type="UniPathway" id="UPA00940"/>
<dbReference type="Proteomes" id="UP000002527">
    <property type="component" value="Chromosome"/>
</dbReference>
<dbReference type="GO" id="GO:0005829">
    <property type="term" value="C:cytosol"/>
    <property type="evidence" value="ECO:0007669"/>
    <property type="project" value="TreeGrafter"/>
</dbReference>
<dbReference type="GO" id="GO:0047952">
    <property type="term" value="F:glycerol-3-phosphate dehydrogenase [NAD(P)+] activity"/>
    <property type="evidence" value="ECO:0007669"/>
    <property type="project" value="UniProtKB-UniRule"/>
</dbReference>
<dbReference type="GO" id="GO:0051287">
    <property type="term" value="F:NAD binding"/>
    <property type="evidence" value="ECO:0007669"/>
    <property type="project" value="InterPro"/>
</dbReference>
<dbReference type="GO" id="GO:0005975">
    <property type="term" value="P:carbohydrate metabolic process"/>
    <property type="evidence" value="ECO:0007669"/>
    <property type="project" value="InterPro"/>
</dbReference>
<dbReference type="GO" id="GO:0046167">
    <property type="term" value="P:glycerol-3-phosphate biosynthetic process"/>
    <property type="evidence" value="ECO:0007669"/>
    <property type="project" value="UniProtKB-UniRule"/>
</dbReference>
<dbReference type="GO" id="GO:0046168">
    <property type="term" value="P:glycerol-3-phosphate catabolic process"/>
    <property type="evidence" value="ECO:0007669"/>
    <property type="project" value="InterPro"/>
</dbReference>
<dbReference type="GO" id="GO:0006650">
    <property type="term" value="P:glycerophospholipid metabolic process"/>
    <property type="evidence" value="ECO:0007669"/>
    <property type="project" value="UniProtKB-UniRule"/>
</dbReference>
<dbReference type="GO" id="GO:0008654">
    <property type="term" value="P:phospholipid biosynthetic process"/>
    <property type="evidence" value="ECO:0007669"/>
    <property type="project" value="UniProtKB-KW"/>
</dbReference>
<dbReference type="FunFam" id="1.10.1040.10:FF:000001">
    <property type="entry name" value="Glycerol-3-phosphate dehydrogenase [NAD(P)+]"/>
    <property type="match status" value="1"/>
</dbReference>
<dbReference type="FunFam" id="3.40.50.720:FF:000019">
    <property type="entry name" value="Glycerol-3-phosphate dehydrogenase [NAD(P)+]"/>
    <property type="match status" value="1"/>
</dbReference>
<dbReference type="Gene3D" id="1.10.1040.10">
    <property type="entry name" value="N-(1-d-carboxylethyl)-l-norvaline Dehydrogenase, domain 2"/>
    <property type="match status" value="1"/>
</dbReference>
<dbReference type="Gene3D" id="3.40.50.720">
    <property type="entry name" value="NAD(P)-binding Rossmann-like Domain"/>
    <property type="match status" value="1"/>
</dbReference>
<dbReference type="HAMAP" id="MF_00394">
    <property type="entry name" value="NAD_Glyc3P_dehydrog"/>
    <property type="match status" value="1"/>
</dbReference>
<dbReference type="InterPro" id="IPR008927">
    <property type="entry name" value="6-PGluconate_DH-like_C_sf"/>
</dbReference>
<dbReference type="InterPro" id="IPR013328">
    <property type="entry name" value="6PGD_dom2"/>
</dbReference>
<dbReference type="InterPro" id="IPR006168">
    <property type="entry name" value="G3P_DH_NAD-dep"/>
</dbReference>
<dbReference type="InterPro" id="IPR006109">
    <property type="entry name" value="G3P_DH_NAD-dep_C"/>
</dbReference>
<dbReference type="InterPro" id="IPR011128">
    <property type="entry name" value="G3P_DH_NAD-dep_N"/>
</dbReference>
<dbReference type="InterPro" id="IPR036291">
    <property type="entry name" value="NAD(P)-bd_dom_sf"/>
</dbReference>
<dbReference type="NCBIfam" id="NF000940">
    <property type="entry name" value="PRK00094.1-2"/>
    <property type="match status" value="1"/>
</dbReference>
<dbReference type="NCBIfam" id="NF000941">
    <property type="entry name" value="PRK00094.1-3"/>
    <property type="match status" value="1"/>
</dbReference>
<dbReference type="NCBIfam" id="NF000942">
    <property type="entry name" value="PRK00094.1-4"/>
    <property type="match status" value="1"/>
</dbReference>
<dbReference type="PANTHER" id="PTHR11728">
    <property type="entry name" value="GLYCEROL-3-PHOSPHATE DEHYDROGENASE"/>
    <property type="match status" value="1"/>
</dbReference>
<dbReference type="PANTHER" id="PTHR11728:SF1">
    <property type="entry name" value="GLYCEROL-3-PHOSPHATE DEHYDROGENASE [NAD(+)] 2, CHLOROPLASTIC"/>
    <property type="match status" value="1"/>
</dbReference>
<dbReference type="Pfam" id="PF07479">
    <property type="entry name" value="NAD_Gly3P_dh_C"/>
    <property type="match status" value="1"/>
</dbReference>
<dbReference type="Pfam" id="PF01210">
    <property type="entry name" value="NAD_Gly3P_dh_N"/>
    <property type="match status" value="1"/>
</dbReference>
<dbReference type="PIRSF" id="PIRSF000114">
    <property type="entry name" value="Glycerol-3-P_dh"/>
    <property type="match status" value="1"/>
</dbReference>
<dbReference type="PRINTS" id="PR00077">
    <property type="entry name" value="GPDHDRGNASE"/>
</dbReference>
<dbReference type="SUPFAM" id="SSF48179">
    <property type="entry name" value="6-phosphogluconate dehydrogenase C-terminal domain-like"/>
    <property type="match status" value="1"/>
</dbReference>
<dbReference type="SUPFAM" id="SSF51735">
    <property type="entry name" value="NAD(P)-binding Rossmann-fold domains"/>
    <property type="match status" value="1"/>
</dbReference>
<dbReference type="PROSITE" id="PS00957">
    <property type="entry name" value="NAD_G3PDH"/>
    <property type="match status" value="1"/>
</dbReference>
<proteinExistence type="inferred from homology"/>
<sequence>MTKITVVGAGSWGTALAMVLADNGHDVRIWGNRSELMDEINTKHENSRYLPGITLPSTIVAYSSLEEALVDVNVVLLVVPTKAYREVLQDMKKYVAGPTTWIHASKGIEPGTSKRISEVIEEEIPEDLIKDVVVLSGPSHAEEVGLRQATTVTSAAKRMEAAEEVQDLFMNSYFRVYTNPDIVGVELGGALKNIIALAAGITDGLGLGDNAKAALMTRGLTEIARLGRKMGGNPLTFAGLTGMGDLIVTCTSVHSRNWRAGNLLGKGHSLEEVLESMGMVVEGVRTTKAAHELAEKMEVEMPITAALYDVLFNGNNVKDAVGSLMGRVRKHEVEAIPDLL</sequence>
<name>GPDA_BACC1</name>
<accession>P61737</accession>
<protein>
    <recommendedName>
        <fullName evidence="1">Glycerol-3-phosphate dehydrogenase [NAD(P)+]</fullName>
        <ecNumber evidence="1">1.1.1.94</ecNumber>
    </recommendedName>
    <alternativeName>
        <fullName evidence="1">NAD(P)(+)-dependent glycerol-3-phosphate dehydrogenase</fullName>
    </alternativeName>
    <alternativeName>
        <fullName evidence="1">NAD(P)H-dependent dihydroxyacetone-phosphate reductase</fullName>
    </alternativeName>
</protein>
<organism>
    <name type="scientific">Bacillus cereus (strain ATCC 10987 / NRS 248)</name>
    <dbReference type="NCBI Taxonomy" id="222523"/>
    <lineage>
        <taxon>Bacteria</taxon>
        <taxon>Bacillati</taxon>
        <taxon>Bacillota</taxon>
        <taxon>Bacilli</taxon>
        <taxon>Bacillales</taxon>
        <taxon>Bacillaceae</taxon>
        <taxon>Bacillus</taxon>
        <taxon>Bacillus cereus group</taxon>
    </lineage>
</organism>
<evidence type="ECO:0000255" key="1">
    <source>
        <dbReference type="HAMAP-Rule" id="MF_00394"/>
    </source>
</evidence>
<comment type="function">
    <text evidence="1">Catalyzes the reduction of the glycolytic intermediate dihydroxyacetone phosphate (DHAP) to sn-glycerol 3-phosphate (G3P), the key precursor for phospholipid synthesis.</text>
</comment>
<comment type="catalytic activity">
    <reaction evidence="1">
        <text>sn-glycerol 3-phosphate + NAD(+) = dihydroxyacetone phosphate + NADH + H(+)</text>
        <dbReference type="Rhea" id="RHEA:11092"/>
        <dbReference type="ChEBI" id="CHEBI:15378"/>
        <dbReference type="ChEBI" id="CHEBI:57540"/>
        <dbReference type="ChEBI" id="CHEBI:57597"/>
        <dbReference type="ChEBI" id="CHEBI:57642"/>
        <dbReference type="ChEBI" id="CHEBI:57945"/>
        <dbReference type="EC" id="1.1.1.94"/>
    </reaction>
    <physiologicalReaction direction="right-to-left" evidence="1">
        <dbReference type="Rhea" id="RHEA:11094"/>
    </physiologicalReaction>
</comment>
<comment type="catalytic activity">
    <reaction evidence="1">
        <text>sn-glycerol 3-phosphate + NADP(+) = dihydroxyacetone phosphate + NADPH + H(+)</text>
        <dbReference type="Rhea" id="RHEA:11096"/>
        <dbReference type="ChEBI" id="CHEBI:15378"/>
        <dbReference type="ChEBI" id="CHEBI:57597"/>
        <dbReference type="ChEBI" id="CHEBI:57642"/>
        <dbReference type="ChEBI" id="CHEBI:57783"/>
        <dbReference type="ChEBI" id="CHEBI:58349"/>
        <dbReference type="EC" id="1.1.1.94"/>
    </reaction>
    <physiologicalReaction direction="right-to-left" evidence="1">
        <dbReference type="Rhea" id="RHEA:11098"/>
    </physiologicalReaction>
</comment>
<comment type="pathway">
    <text evidence="1">Membrane lipid metabolism; glycerophospholipid metabolism.</text>
</comment>
<comment type="subcellular location">
    <subcellularLocation>
        <location evidence="1">Cytoplasm</location>
    </subcellularLocation>
</comment>
<comment type="similarity">
    <text evidence="1">Belongs to the NAD-dependent glycerol-3-phosphate dehydrogenase family.</text>
</comment>
<feature type="chain" id="PRO_0000137920" description="Glycerol-3-phosphate dehydrogenase [NAD(P)+]">
    <location>
        <begin position="1"/>
        <end position="340"/>
    </location>
</feature>
<feature type="active site" description="Proton acceptor" evidence="1">
    <location>
        <position position="192"/>
    </location>
</feature>
<feature type="binding site" evidence="1">
    <location>
        <position position="11"/>
    </location>
    <ligand>
        <name>NADPH</name>
        <dbReference type="ChEBI" id="CHEBI:57783"/>
    </ligand>
</feature>
<feature type="binding site" evidence="1">
    <location>
        <position position="12"/>
    </location>
    <ligand>
        <name>NADPH</name>
        <dbReference type="ChEBI" id="CHEBI:57783"/>
    </ligand>
</feature>
<feature type="binding site" evidence="1">
    <location>
        <position position="33"/>
    </location>
    <ligand>
        <name>NADPH</name>
        <dbReference type="ChEBI" id="CHEBI:57783"/>
    </ligand>
</feature>
<feature type="binding site" evidence="1">
    <location>
        <position position="106"/>
    </location>
    <ligand>
        <name>NADPH</name>
        <dbReference type="ChEBI" id="CHEBI:57783"/>
    </ligand>
</feature>
<feature type="binding site" evidence="1">
    <location>
        <position position="106"/>
    </location>
    <ligand>
        <name>sn-glycerol 3-phosphate</name>
        <dbReference type="ChEBI" id="CHEBI:57597"/>
    </ligand>
</feature>
<feature type="binding site" evidence="1">
    <location>
        <position position="137"/>
    </location>
    <ligand>
        <name>sn-glycerol 3-phosphate</name>
        <dbReference type="ChEBI" id="CHEBI:57597"/>
    </ligand>
</feature>
<feature type="binding site" evidence="1">
    <location>
        <position position="139"/>
    </location>
    <ligand>
        <name>sn-glycerol 3-phosphate</name>
        <dbReference type="ChEBI" id="CHEBI:57597"/>
    </ligand>
</feature>
<feature type="binding site" evidence="1">
    <location>
        <position position="141"/>
    </location>
    <ligand>
        <name>NADPH</name>
        <dbReference type="ChEBI" id="CHEBI:57783"/>
    </ligand>
</feature>
<feature type="binding site" evidence="1">
    <location>
        <position position="192"/>
    </location>
    <ligand>
        <name>sn-glycerol 3-phosphate</name>
        <dbReference type="ChEBI" id="CHEBI:57597"/>
    </ligand>
</feature>
<feature type="binding site" evidence="1">
    <location>
        <position position="245"/>
    </location>
    <ligand>
        <name>sn-glycerol 3-phosphate</name>
        <dbReference type="ChEBI" id="CHEBI:57597"/>
    </ligand>
</feature>
<feature type="binding site" evidence="1">
    <location>
        <position position="255"/>
    </location>
    <ligand>
        <name>sn-glycerol 3-phosphate</name>
        <dbReference type="ChEBI" id="CHEBI:57597"/>
    </ligand>
</feature>
<feature type="binding site" evidence="1">
    <location>
        <position position="256"/>
    </location>
    <ligand>
        <name>NADPH</name>
        <dbReference type="ChEBI" id="CHEBI:57783"/>
    </ligand>
</feature>
<feature type="binding site" evidence="1">
    <location>
        <position position="256"/>
    </location>
    <ligand>
        <name>sn-glycerol 3-phosphate</name>
        <dbReference type="ChEBI" id="CHEBI:57597"/>
    </ligand>
</feature>
<feature type="binding site" evidence="1">
    <location>
        <position position="257"/>
    </location>
    <ligand>
        <name>sn-glycerol 3-phosphate</name>
        <dbReference type="ChEBI" id="CHEBI:57597"/>
    </ligand>
</feature>
<feature type="binding site" evidence="1">
    <location>
        <position position="280"/>
    </location>
    <ligand>
        <name>NADPH</name>
        <dbReference type="ChEBI" id="CHEBI:57783"/>
    </ligand>
</feature>
<feature type="binding site" evidence="1">
    <location>
        <position position="282"/>
    </location>
    <ligand>
        <name>NADPH</name>
        <dbReference type="ChEBI" id="CHEBI:57783"/>
    </ligand>
</feature>